<protein>
    <recommendedName>
        <fullName>Signal peptidase complex subunit 1</fullName>
    </recommendedName>
    <alternativeName>
        <fullName>Microsomal signal peptidase 12 kDa subunit</fullName>
        <shortName>SPase 12 kDa subunit</shortName>
    </alternativeName>
</protein>
<feature type="chain" id="PRO_0000215159" description="Signal peptidase complex subunit 1">
    <location>
        <begin position="1"/>
        <end position="98"/>
    </location>
</feature>
<feature type="topological domain" description="Cytoplasmic" evidence="2">
    <location>
        <begin position="1"/>
        <end position="18"/>
    </location>
</feature>
<feature type="transmembrane region" description="Helical" evidence="4">
    <location>
        <begin position="19"/>
        <end position="38"/>
    </location>
</feature>
<feature type="topological domain" description="Lumenal" evidence="2">
    <location>
        <begin position="39"/>
        <end position="42"/>
    </location>
</feature>
<feature type="transmembrane region" description="Helical" evidence="4">
    <location>
        <begin position="43"/>
        <end position="65"/>
    </location>
</feature>
<feature type="topological domain" description="Cytoplasmic" evidence="2">
    <location>
        <begin position="66"/>
        <end position="98"/>
    </location>
</feature>
<feature type="region of interest" description="Disordered" evidence="5">
    <location>
        <begin position="78"/>
        <end position="98"/>
    </location>
</feature>
<feature type="modified residue" description="Phosphoserine" evidence="6">
    <location>
        <position position="84"/>
    </location>
</feature>
<feature type="modified residue" description="Phosphoserine" evidence="6">
    <location>
        <position position="85"/>
    </location>
</feature>
<feature type="modified residue" description="Phosphoserine" evidence="6">
    <location>
        <position position="86"/>
    </location>
</feature>
<feature type="modified residue" description="Phosphoserine" evidence="6">
    <location>
        <position position="88"/>
    </location>
</feature>
<organism>
    <name type="scientific">Drosophila melanogaster</name>
    <name type="common">Fruit fly</name>
    <dbReference type="NCBI Taxonomy" id="7227"/>
    <lineage>
        <taxon>Eukaryota</taxon>
        <taxon>Metazoa</taxon>
        <taxon>Ecdysozoa</taxon>
        <taxon>Arthropoda</taxon>
        <taxon>Hexapoda</taxon>
        <taxon>Insecta</taxon>
        <taxon>Pterygota</taxon>
        <taxon>Neoptera</taxon>
        <taxon>Endopterygota</taxon>
        <taxon>Diptera</taxon>
        <taxon>Brachycera</taxon>
        <taxon>Muscomorpha</taxon>
        <taxon>Ephydroidea</taxon>
        <taxon>Drosophilidae</taxon>
        <taxon>Drosophila</taxon>
        <taxon>Sophophora</taxon>
    </lineage>
</organism>
<accession>Q9VAL0</accession>
<dbReference type="EMBL" id="AE014297">
    <property type="protein sequence ID" value="AAF56894.2"/>
    <property type="molecule type" value="Genomic_DNA"/>
</dbReference>
<dbReference type="RefSeq" id="NP_788760.1">
    <property type="nucleotide sequence ID" value="NM_176583.3"/>
</dbReference>
<dbReference type="SMR" id="Q9VAL0"/>
<dbReference type="BioGRID" id="72538">
    <property type="interactions" value="3"/>
</dbReference>
<dbReference type="ComplexPortal" id="CPX-2233">
    <property type="entry name" value="Signal peptidase complex"/>
</dbReference>
<dbReference type="FunCoup" id="Q9VAL0">
    <property type="interactions" value="865"/>
</dbReference>
<dbReference type="IntAct" id="Q9VAL0">
    <property type="interactions" value="4"/>
</dbReference>
<dbReference type="STRING" id="7227.FBpp0084801"/>
<dbReference type="iPTMnet" id="Q9VAL0"/>
<dbReference type="PaxDb" id="7227-FBpp0084801"/>
<dbReference type="DNASU" id="50096"/>
<dbReference type="EnsemblMetazoa" id="FBtr0085435">
    <property type="protein sequence ID" value="FBpp0084801"/>
    <property type="gene ID" value="FBgn0040623"/>
</dbReference>
<dbReference type="GeneID" id="50096"/>
<dbReference type="KEGG" id="dme:Dmel_CG11500"/>
<dbReference type="AGR" id="FB:FBgn0040623"/>
<dbReference type="CTD" id="50096"/>
<dbReference type="FlyBase" id="FBgn0040623">
    <property type="gene designation" value="Spase12"/>
</dbReference>
<dbReference type="VEuPathDB" id="VectorBase:FBgn0040623"/>
<dbReference type="eggNOG" id="KOG4112">
    <property type="taxonomic scope" value="Eukaryota"/>
</dbReference>
<dbReference type="GeneTree" id="ENSGT00390000018321"/>
<dbReference type="HOGENOM" id="CLU_134505_1_1_1"/>
<dbReference type="InParanoid" id="Q9VAL0"/>
<dbReference type="OMA" id="IHLTLWT"/>
<dbReference type="OrthoDB" id="263893at2759"/>
<dbReference type="PhylomeDB" id="Q9VAL0"/>
<dbReference type="BioGRID-ORCS" id="50096">
    <property type="hits" value="1 hit in 1 CRISPR screen"/>
</dbReference>
<dbReference type="GenomeRNAi" id="50096"/>
<dbReference type="PRO" id="PR:Q9VAL0"/>
<dbReference type="Proteomes" id="UP000000803">
    <property type="component" value="Chromosome 3R"/>
</dbReference>
<dbReference type="Bgee" id="FBgn0040623">
    <property type="expression patterns" value="Expressed in adult class III enteroendocrine cell in adult midgut (Drosophila) and 129 other cell types or tissues"/>
</dbReference>
<dbReference type="ExpressionAtlas" id="Q9VAL0">
    <property type="expression patterns" value="differential"/>
</dbReference>
<dbReference type="GO" id="GO:0005787">
    <property type="term" value="C:signal peptidase complex"/>
    <property type="evidence" value="ECO:0000318"/>
    <property type="project" value="GO_Central"/>
</dbReference>
<dbReference type="GO" id="GO:0045047">
    <property type="term" value="P:protein targeting to ER"/>
    <property type="evidence" value="ECO:0000318"/>
    <property type="project" value="GO_Central"/>
</dbReference>
<dbReference type="GO" id="GO:0006465">
    <property type="term" value="P:signal peptide processing"/>
    <property type="evidence" value="ECO:0000318"/>
    <property type="project" value="GO_Central"/>
</dbReference>
<dbReference type="InterPro" id="IPR009542">
    <property type="entry name" value="Spc1/SPCS1"/>
</dbReference>
<dbReference type="PANTHER" id="PTHR13202">
    <property type="entry name" value="MICROSOMAL SIGNAL PEPTIDASE 12 KDA SUBUNIT"/>
    <property type="match status" value="1"/>
</dbReference>
<dbReference type="PANTHER" id="PTHR13202:SF0">
    <property type="entry name" value="SIGNAL PEPTIDASE COMPLEX SUBUNIT 1"/>
    <property type="match status" value="1"/>
</dbReference>
<dbReference type="Pfam" id="PF06645">
    <property type="entry name" value="SPC12"/>
    <property type="match status" value="1"/>
</dbReference>
<sequence>MLDIQTHMDFAGQGKAERWSRFIITFFGIVGLVYGAFVQQFSQTVYILGAGFVLSSLITIPPWPLYRRNALKWQKPIDTDAKSSSSESGDEGKKKKKQ</sequence>
<gene>
    <name type="primary">Spase12</name>
    <name type="ORF">CG11500</name>
</gene>
<evidence type="ECO:0000250" key="1">
    <source>
        <dbReference type="UniProtKB" id="P46965"/>
    </source>
</evidence>
<evidence type="ECO:0000250" key="2">
    <source>
        <dbReference type="UniProtKB" id="P83362"/>
    </source>
</evidence>
<evidence type="ECO:0000250" key="3">
    <source>
        <dbReference type="UniProtKB" id="Q9Y6A9"/>
    </source>
</evidence>
<evidence type="ECO:0000255" key="4"/>
<evidence type="ECO:0000256" key="5">
    <source>
        <dbReference type="SAM" id="MobiDB-lite"/>
    </source>
</evidence>
<evidence type="ECO:0000269" key="6">
    <source>
    </source>
</evidence>
<evidence type="ECO:0000269" key="7">
    <source>
    </source>
</evidence>
<evidence type="ECO:0000305" key="8"/>
<reference key="1">
    <citation type="journal article" date="2000" name="Science">
        <title>The genome sequence of Drosophila melanogaster.</title>
        <authorList>
            <person name="Adams M.D."/>
            <person name="Celniker S.E."/>
            <person name="Holt R.A."/>
            <person name="Evans C.A."/>
            <person name="Gocayne J.D."/>
            <person name="Amanatides P.G."/>
            <person name="Scherer S.E."/>
            <person name="Li P.W."/>
            <person name="Hoskins R.A."/>
            <person name="Galle R.F."/>
            <person name="George R.A."/>
            <person name="Lewis S.E."/>
            <person name="Richards S."/>
            <person name="Ashburner M."/>
            <person name="Henderson S.N."/>
            <person name="Sutton G.G."/>
            <person name="Wortman J.R."/>
            <person name="Yandell M.D."/>
            <person name="Zhang Q."/>
            <person name="Chen L.X."/>
            <person name="Brandon R.C."/>
            <person name="Rogers Y.-H.C."/>
            <person name="Blazej R.G."/>
            <person name="Champe M."/>
            <person name="Pfeiffer B.D."/>
            <person name="Wan K.H."/>
            <person name="Doyle C."/>
            <person name="Baxter E.G."/>
            <person name="Helt G."/>
            <person name="Nelson C.R."/>
            <person name="Miklos G.L.G."/>
            <person name="Abril J.F."/>
            <person name="Agbayani A."/>
            <person name="An H.-J."/>
            <person name="Andrews-Pfannkoch C."/>
            <person name="Baldwin D."/>
            <person name="Ballew R.M."/>
            <person name="Basu A."/>
            <person name="Baxendale J."/>
            <person name="Bayraktaroglu L."/>
            <person name="Beasley E.M."/>
            <person name="Beeson K.Y."/>
            <person name="Benos P.V."/>
            <person name="Berman B.P."/>
            <person name="Bhandari D."/>
            <person name="Bolshakov S."/>
            <person name="Borkova D."/>
            <person name="Botchan M.R."/>
            <person name="Bouck J."/>
            <person name="Brokstein P."/>
            <person name="Brottier P."/>
            <person name="Burtis K.C."/>
            <person name="Busam D.A."/>
            <person name="Butler H."/>
            <person name="Cadieu E."/>
            <person name="Center A."/>
            <person name="Chandra I."/>
            <person name="Cherry J.M."/>
            <person name="Cawley S."/>
            <person name="Dahlke C."/>
            <person name="Davenport L.B."/>
            <person name="Davies P."/>
            <person name="de Pablos B."/>
            <person name="Delcher A."/>
            <person name="Deng Z."/>
            <person name="Mays A.D."/>
            <person name="Dew I."/>
            <person name="Dietz S.M."/>
            <person name="Dodson K."/>
            <person name="Doup L.E."/>
            <person name="Downes M."/>
            <person name="Dugan-Rocha S."/>
            <person name="Dunkov B.C."/>
            <person name="Dunn P."/>
            <person name="Durbin K.J."/>
            <person name="Evangelista C.C."/>
            <person name="Ferraz C."/>
            <person name="Ferriera S."/>
            <person name="Fleischmann W."/>
            <person name="Fosler C."/>
            <person name="Gabrielian A.E."/>
            <person name="Garg N.S."/>
            <person name="Gelbart W.M."/>
            <person name="Glasser K."/>
            <person name="Glodek A."/>
            <person name="Gong F."/>
            <person name="Gorrell J.H."/>
            <person name="Gu Z."/>
            <person name="Guan P."/>
            <person name="Harris M."/>
            <person name="Harris N.L."/>
            <person name="Harvey D.A."/>
            <person name="Heiman T.J."/>
            <person name="Hernandez J.R."/>
            <person name="Houck J."/>
            <person name="Hostin D."/>
            <person name="Houston K.A."/>
            <person name="Howland T.J."/>
            <person name="Wei M.-H."/>
            <person name="Ibegwam C."/>
            <person name="Jalali M."/>
            <person name="Kalush F."/>
            <person name="Karpen G.H."/>
            <person name="Ke Z."/>
            <person name="Kennison J.A."/>
            <person name="Ketchum K.A."/>
            <person name="Kimmel B.E."/>
            <person name="Kodira C.D."/>
            <person name="Kraft C.L."/>
            <person name="Kravitz S."/>
            <person name="Kulp D."/>
            <person name="Lai Z."/>
            <person name="Lasko P."/>
            <person name="Lei Y."/>
            <person name="Levitsky A.A."/>
            <person name="Li J.H."/>
            <person name="Li Z."/>
            <person name="Liang Y."/>
            <person name="Lin X."/>
            <person name="Liu X."/>
            <person name="Mattei B."/>
            <person name="McIntosh T.C."/>
            <person name="McLeod M.P."/>
            <person name="McPherson D."/>
            <person name="Merkulov G."/>
            <person name="Milshina N.V."/>
            <person name="Mobarry C."/>
            <person name="Morris J."/>
            <person name="Moshrefi A."/>
            <person name="Mount S.M."/>
            <person name="Moy M."/>
            <person name="Murphy B."/>
            <person name="Murphy L."/>
            <person name="Muzny D.M."/>
            <person name="Nelson D.L."/>
            <person name="Nelson D.R."/>
            <person name="Nelson K.A."/>
            <person name="Nixon K."/>
            <person name="Nusskern D.R."/>
            <person name="Pacleb J.M."/>
            <person name="Palazzolo M."/>
            <person name="Pittman G.S."/>
            <person name="Pan S."/>
            <person name="Pollard J."/>
            <person name="Puri V."/>
            <person name="Reese M.G."/>
            <person name="Reinert K."/>
            <person name="Remington K."/>
            <person name="Saunders R.D.C."/>
            <person name="Scheeler F."/>
            <person name="Shen H."/>
            <person name="Shue B.C."/>
            <person name="Siden-Kiamos I."/>
            <person name="Simpson M."/>
            <person name="Skupski M.P."/>
            <person name="Smith T.J."/>
            <person name="Spier E."/>
            <person name="Spradling A.C."/>
            <person name="Stapleton M."/>
            <person name="Strong R."/>
            <person name="Sun E."/>
            <person name="Svirskas R."/>
            <person name="Tector C."/>
            <person name="Turner R."/>
            <person name="Venter E."/>
            <person name="Wang A.H."/>
            <person name="Wang X."/>
            <person name="Wang Z.-Y."/>
            <person name="Wassarman D.A."/>
            <person name="Weinstock G.M."/>
            <person name="Weissenbach J."/>
            <person name="Williams S.M."/>
            <person name="Woodage T."/>
            <person name="Worley K.C."/>
            <person name="Wu D."/>
            <person name="Yang S."/>
            <person name="Yao Q.A."/>
            <person name="Ye J."/>
            <person name="Yeh R.-F."/>
            <person name="Zaveri J.S."/>
            <person name="Zhan M."/>
            <person name="Zhang G."/>
            <person name="Zhao Q."/>
            <person name="Zheng L."/>
            <person name="Zheng X.H."/>
            <person name="Zhong F.N."/>
            <person name="Zhong W."/>
            <person name="Zhou X."/>
            <person name="Zhu S.C."/>
            <person name="Zhu X."/>
            <person name="Smith H.O."/>
            <person name="Gibbs R.A."/>
            <person name="Myers E.W."/>
            <person name="Rubin G.M."/>
            <person name="Venter J.C."/>
        </authorList>
    </citation>
    <scope>NUCLEOTIDE SEQUENCE [LARGE SCALE GENOMIC DNA]</scope>
    <source>
        <strain>Berkeley</strain>
    </source>
</reference>
<reference key="2">
    <citation type="journal article" date="2002" name="Genome Biol.">
        <title>Annotation of the Drosophila melanogaster euchromatic genome: a systematic review.</title>
        <authorList>
            <person name="Misra S."/>
            <person name="Crosby M.A."/>
            <person name="Mungall C.J."/>
            <person name="Matthews B.B."/>
            <person name="Campbell K.S."/>
            <person name="Hradecky P."/>
            <person name="Huang Y."/>
            <person name="Kaminker J.S."/>
            <person name="Millburn G.H."/>
            <person name="Prochnik S.E."/>
            <person name="Smith C.D."/>
            <person name="Tupy J.L."/>
            <person name="Whitfield E.J."/>
            <person name="Bayraktaroglu L."/>
            <person name="Berman B.P."/>
            <person name="Bettencourt B.R."/>
            <person name="Celniker S.E."/>
            <person name="de Grey A.D.N.J."/>
            <person name="Drysdale R.A."/>
            <person name="Harris N.L."/>
            <person name="Richter J."/>
            <person name="Russo S."/>
            <person name="Schroeder A.J."/>
            <person name="Shu S.Q."/>
            <person name="Stapleton M."/>
            <person name="Yamada C."/>
            <person name="Ashburner M."/>
            <person name="Gelbart W.M."/>
            <person name="Rubin G.M."/>
            <person name="Lewis S.E."/>
        </authorList>
    </citation>
    <scope>GENOME REANNOTATION</scope>
    <source>
        <strain>Berkeley</strain>
    </source>
</reference>
<reference key="3">
    <citation type="journal article" date="2005" name="Development">
        <title>CrebA regulates secretory activity in the Drosophila salivary gland and epidermis.</title>
        <authorList>
            <person name="Abrams E.W."/>
            <person name="Andrew D.J."/>
        </authorList>
    </citation>
    <scope>IDENTIFICATION</scope>
</reference>
<reference key="4">
    <citation type="journal article" date="2008" name="J. Proteome Res.">
        <title>Phosphoproteome analysis of Drosophila melanogaster embryos.</title>
        <authorList>
            <person name="Zhai B."/>
            <person name="Villen J."/>
            <person name="Beausoleil S.A."/>
            <person name="Mintseris J."/>
            <person name="Gygi S.P."/>
        </authorList>
    </citation>
    <scope>PHOSPHORYLATION [LARGE SCALE ANALYSIS] AT SER-84; SER-85; SER-86 AND SER-88</scope>
    <scope>IDENTIFICATION BY MASS SPECTROMETRY</scope>
    <source>
        <tissue>Embryo</tissue>
    </source>
</reference>
<reference key="5">
    <citation type="journal article" date="2016" name="Nature">
        <title>A CRISPR screen defines a signal peptide processing pathway required by flaviviruses.</title>
        <authorList>
            <person name="Zhang R."/>
            <person name="Miner J.J."/>
            <person name="Gorman M.J."/>
            <person name="Rausch K."/>
            <person name="Ramage H."/>
            <person name="White J.P."/>
            <person name="Zuiani A."/>
            <person name="Zhang P."/>
            <person name="Fernandez E."/>
            <person name="Zhang Q."/>
            <person name="Dowd K.A."/>
            <person name="Pierson T.C."/>
            <person name="Cherry S."/>
            <person name="Diamond M.S."/>
        </authorList>
    </citation>
    <scope>FUNCTION (MICROBIAL INFECTION)</scope>
    <scope>DISRUPTION PHENOTYPE (MICROBIAL INFECTION)</scope>
</reference>
<keyword id="KW-0256">Endoplasmic reticulum</keyword>
<keyword id="KW-0472">Membrane</keyword>
<keyword id="KW-0597">Phosphoprotein</keyword>
<keyword id="KW-1185">Reference proteome</keyword>
<keyword id="KW-0812">Transmembrane</keyword>
<keyword id="KW-1133">Transmembrane helix</keyword>
<name>SPCS1_DROME</name>
<proteinExistence type="evidence at protein level"/>
<comment type="function">
    <text evidence="1 3">Component of the signal peptidase complex (SPC) which catalyzes the cleavage of N-terminal signal sequences from nascent proteins as they are translocated into the lumen of the endoplasmic reticulum (By similarity). Dispensable for SPC enzymatic activity (By similarity).</text>
</comment>
<comment type="function">
    <text evidence="7">(Microbial infection) Plays an important role in infection by flaviviruses such as West Nile virus and Dengue virus type 2.</text>
</comment>
<comment type="subunit">
    <text evidence="3">Component of the signal peptidase complex (SPC) composed of a catalytic subunit twr/SEC11 and three accessory subunits Spase12/SPCS1, Spase25/SPCS2 and Spase22-23/SPCS3. The complex induces a local thinning of the ER membrane which is used to measure the length of the signal peptide (SP) h-region of protein substrates. This ensures the selectivity of the complex towards h-regions shorter than 18-20 amino acids.</text>
</comment>
<comment type="subcellular location">
    <subcellularLocation>
        <location evidence="2">Endoplasmic reticulum membrane</location>
        <topology evidence="2">Multi-pass membrane protein</topology>
    </subcellularLocation>
</comment>
<comment type="disruption phenotype">
    <text evidence="7">(Microbial infection) RNAi-mediated knockdown reduces infection by West Nile virus (WNV) and Dengue virus type 2 (DENV-2).</text>
</comment>
<comment type="similarity">
    <text evidence="8">Belongs to the SPCS1 family.</text>
</comment>